<gene>
    <name type="primary">accD</name>
    <name type="synonym">accA</name>
    <name type="synonym">accDA</name>
    <name type="ordered locus">Sare_2689</name>
</gene>
<comment type="function">
    <text evidence="1">Component of the acetyl coenzyme A carboxylase (ACC) complex. Biotin carboxylase (BC) catalyzes the carboxylation of biotin on its carrier protein (BCCP) and then the CO(2) group is transferred by the transcarboxylase to acetyl-CoA to form malonyl-CoA (By similarity).</text>
</comment>
<comment type="catalytic activity">
    <reaction>
        <text>N(6)-carboxybiotinyl-L-lysyl-[protein] + acetyl-CoA = N(6)-biotinyl-L-lysyl-[protein] + malonyl-CoA</text>
        <dbReference type="Rhea" id="RHEA:54728"/>
        <dbReference type="Rhea" id="RHEA-COMP:10505"/>
        <dbReference type="Rhea" id="RHEA-COMP:10506"/>
        <dbReference type="ChEBI" id="CHEBI:57288"/>
        <dbReference type="ChEBI" id="CHEBI:57384"/>
        <dbReference type="ChEBI" id="CHEBI:83144"/>
        <dbReference type="ChEBI" id="CHEBI:83145"/>
        <dbReference type="EC" id="2.1.3.15"/>
    </reaction>
</comment>
<comment type="cofactor">
    <cofactor evidence="1">
        <name>Zn(2+)</name>
        <dbReference type="ChEBI" id="CHEBI:29105"/>
    </cofactor>
    <text evidence="1">Binds 1 zinc ion per subunit.</text>
</comment>
<comment type="pathway">
    <text>Lipid metabolism; malonyl-CoA biosynthesis; malonyl-CoA from acetyl-CoA: step 1/1.</text>
</comment>
<comment type="subunit">
    <text evidence="1">Acetyl-CoA carboxylase is a heterotetramer composed of biotin carboxyl carrier protein (AccB), biotin carboxylase (AccC) and two subunits of ACCase subunit beta/alpha.</text>
</comment>
<comment type="subcellular location">
    <subcellularLocation>
        <location evidence="1">Cytoplasm</location>
    </subcellularLocation>
</comment>
<comment type="similarity">
    <text evidence="6">In the N-terminal section; belongs to the AccD/PCCB family.</text>
</comment>
<comment type="similarity">
    <text evidence="6">In the C-terminal section; belongs to the AccA family.</text>
</comment>
<keyword id="KW-0067">ATP-binding</keyword>
<keyword id="KW-0963">Cytoplasm</keyword>
<keyword id="KW-0275">Fatty acid biosynthesis</keyword>
<keyword id="KW-0276">Fatty acid metabolism</keyword>
<keyword id="KW-0444">Lipid biosynthesis</keyword>
<keyword id="KW-0443">Lipid metabolism</keyword>
<keyword id="KW-0479">Metal-binding</keyword>
<keyword id="KW-0547">Nucleotide-binding</keyword>
<keyword id="KW-0808">Transferase</keyword>
<keyword id="KW-0862">Zinc</keyword>
<keyword id="KW-0863">Zinc-finger</keyword>
<evidence type="ECO:0000250" key="1"/>
<evidence type="ECO:0000255" key="2">
    <source>
        <dbReference type="PROSITE-ProRule" id="PRU01136"/>
    </source>
</evidence>
<evidence type="ECO:0000255" key="3">
    <source>
        <dbReference type="PROSITE-ProRule" id="PRU01137"/>
    </source>
</evidence>
<evidence type="ECO:0000255" key="4">
    <source>
        <dbReference type="PROSITE-ProRule" id="PRU01138"/>
    </source>
</evidence>
<evidence type="ECO:0000256" key="5">
    <source>
        <dbReference type="SAM" id="MobiDB-lite"/>
    </source>
</evidence>
<evidence type="ECO:0000305" key="6"/>
<reference key="1">
    <citation type="submission" date="2007-10" db="EMBL/GenBank/DDBJ databases">
        <title>Complete sequence of Salinispora arenicola CNS-205.</title>
        <authorList>
            <consortium name="US DOE Joint Genome Institute"/>
            <person name="Copeland A."/>
            <person name="Lucas S."/>
            <person name="Lapidus A."/>
            <person name="Barry K."/>
            <person name="Glavina del Rio T."/>
            <person name="Dalin E."/>
            <person name="Tice H."/>
            <person name="Pitluck S."/>
            <person name="Foster B."/>
            <person name="Schmutz J."/>
            <person name="Larimer F."/>
            <person name="Land M."/>
            <person name="Hauser L."/>
            <person name="Kyrpides N."/>
            <person name="Ivanova N."/>
            <person name="Jensen P.R."/>
            <person name="Moore B.S."/>
            <person name="Penn K."/>
            <person name="Jenkins C."/>
            <person name="Udwary D."/>
            <person name="Xiang L."/>
            <person name="Gontang E."/>
            <person name="Richardson P."/>
        </authorList>
    </citation>
    <scope>NUCLEOTIDE SEQUENCE [LARGE SCALE GENOMIC DNA]</scope>
    <source>
        <strain>CNS-205</strain>
    </source>
</reference>
<protein>
    <recommendedName>
        <fullName>Acetyl-coenzyme A carboxylase carboxyl transferase subunits beta/alpha</fullName>
        <shortName>ACCase subunits beta/alpha</shortName>
        <shortName>Acetyl-CoA carboxylase carboxyltransferase subunits beta/alpha</shortName>
        <ecNumber>2.1.3.15</ecNumber>
    </recommendedName>
</protein>
<proteinExistence type="inferred from homology"/>
<organism>
    <name type="scientific">Salinispora arenicola (strain CNS-205)</name>
    <dbReference type="NCBI Taxonomy" id="391037"/>
    <lineage>
        <taxon>Bacteria</taxon>
        <taxon>Bacillati</taxon>
        <taxon>Actinomycetota</taxon>
        <taxon>Actinomycetes</taxon>
        <taxon>Micromonosporales</taxon>
        <taxon>Micromonosporaceae</taxon>
        <taxon>Salinispora</taxon>
    </lineage>
</organism>
<feature type="chain" id="PRO_0000389902" description="Acetyl-coenzyme A carboxylase carboxyl transferase subunits beta/alpha">
    <location>
        <begin position="1"/>
        <end position="566"/>
    </location>
</feature>
<feature type="domain" description="CoA carboxyltransferase N-terminal" evidence="2">
    <location>
        <begin position="11"/>
        <end position="280"/>
    </location>
</feature>
<feature type="domain" description="CoA carboxyltransferase C-terminal" evidence="3">
    <location>
        <begin position="282"/>
        <end position="534"/>
    </location>
</feature>
<feature type="zinc finger region" description="C4-type" evidence="1">
    <location>
        <begin position="15"/>
        <end position="37"/>
    </location>
</feature>
<feature type="region of interest" description="Acetyl-coenzyme A carboxylase carboxyl transferase subunit beta" evidence="1">
    <location>
        <begin position="1"/>
        <end position="243"/>
    </location>
</feature>
<feature type="region of interest" description="Carboxyltransferase" evidence="4">
    <location>
        <begin position="11"/>
        <end position="534"/>
    </location>
</feature>
<feature type="region of interest" description="Acetyl-coenzyme A carboxylase carboxyl transferase subunit alpha" evidence="1">
    <location>
        <begin position="244"/>
        <end position="566"/>
    </location>
</feature>
<feature type="region of interest" description="Disordered" evidence="5">
    <location>
        <begin position="268"/>
        <end position="292"/>
    </location>
</feature>
<feature type="binding site" evidence="1">
    <location>
        <position position="15"/>
    </location>
    <ligand>
        <name>Zn(2+)</name>
        <dbReference type="ChEBI" id="CHEBI:29105"/>
    </ligand>
</feature>
<feature type="binding site" evidence="1">
    <location>
        <position position="18"/>
    </location>
    <ligand>
        <name>Zn(2+)</name>
        <dbReference type="ChEBI" id="CHEBI:29105"/>
    </ligand>
</feature>
<feature type="binding site" evidence="1">
    <location>
        <position position="34"/>
    </location>
    <ligand>
        <name>Zn(2+)</name>
        <dbReference type="ChEBI" id="CHEBI:29105"/>
    </ligand>
</feature>
<feature type="binding site" evidence="1">
    <location>
        <position position="37"/>
    </location>
    <ligand>
        <name>Zn(2+)</name>
        <dbReference type="ChEBI" id="CHEBI:29105"/>
    </ligand>
</feature>
<dbReference type="EC" id="2.1.3.15"/>
<dbReference type="EMBL" id="CP000850">
    <property type="protein sequence ID" value="ABV98526.1"/>
    <property type="molecule type" value="Genomic_DNA"/>
</dbReference>
<dbReference type="SMR" id="A8M4V8"/>
<dbReference type="STRING" id="391037.Sare_2689"/>
<dbReference type="KEGG" id="saq:Sare_2689"/>
<dbReference type="PATRIC" id="fig|391037.6.peg.2724"/>
<dbReference type="eggNOG" id="COG0777">
    <property type="taxonomic scope" value="Bacteria"/>
</dbReference>
<dbReference type="eggNOG" id="COG0825">
    <property type="taxonomic scope" value="Bacteria"/>
</dbReference>
<dbReference type="HOGENOM" id="CLU_015486_2_1_11"/>
<dbReference type="OrthoDB" id="9772975at2"/>
<dbReference type="UniPathway" id="UPA00655">
    <property type="reaction ID" value="UER00711"/>
</dbReference>
<dbReference type="GO" id="GO:0009317">
    <property type="term" value="C:acetyl-CoA carboxylase complex"/>
    <property type="evidence" value="ECO:0007669"/>
    <property type="project" value="InterPro"/>
</dbReference>
<dbReference type="GO" id="GO:0003989">
    <property type="term" value="F:acetyl-CoA carboxylase activity"/>
    <property type="evidence" value="ECO:0007669"/>
    <property type="project" value="InterPro"/>
</dbReference>
<dbReference type="GO" id="GO:0005524">
    <property type="term" value="F:ATP binding"/>
    <property type="evidence" value="ECO:0007669"/>
    <property type="project" value="UniProtKB-KW"/>
</dbReference>
<dbReference type="GO" id="GO:0016743">
    <property type="term" value="F:carboxyl- or carbamoyltransferase activity"/>
    <property type="evidence" value="ECO:0007669"/>
    <property type="project" value="UniProtKB-UniRule"/>
</dbReference>
<dbReference type="GO" id="GO:0008270">
    <property type="term" value="F:zinc ion binding"/>
    <property type="evidence" value="ECO:0007669"/>
    <property type="project" value="UniProtKB-UniRule"/>
</dbReference>
<dbReference type="GO" id="GO:0006633">
    <property type="term" value="P:fatty acid biosynthetic process"/>
    <property type="evidence" value="ECO:0007669"/>
    <property type="project" value="UniProtKB-KW"/>
</dbReference>
<dbReference type="GO" id="GO:2001295">
    <property type="term" value="P:malonyl-CoA biosynthetic process"/>
    <property type="evidence" value="ECO:0007669"/>
    <property type="project" value="UniProtKB-UniRule"/>
</dbReference>
<dbReference type="Gene3D" id="3.90.226.10">
    <property type="entry name" value="2-enoyl-CoA Hydratase, Chain A, domain 1"/>
    <property type="match status" value="2"/>
</dbReference>
<dbReference type="HAMAP" id="MF_00823">
    <property type="entry name" value="AcetylCoA_CT_alpha"/>
    <property type="match status" value="1"/>
</dbReference>
<dbReference type="HAMAP" id="MF_01395">
    <property type="entry name" value="AcetylCoA_CT_beta"/>
    <property type="match status" value="1"/>
</dbReference>
<dbReference type="InterPro" id="IPR034733">
    <property type="entry name" value="AcCoA_carboxyl_beta"/>
</dbReference>
<dbReference type="InterPro" id="IPR001095">
    <property type="entry name" value="Acetyl_CoA_COase_a_su"/>
</dbReference>
<dbReference type="InterPro" id="IPR000438">
    <property type="entry name" value="Acetyl_CoA_COase_Trfase_b_su"/>
</dbReference>
<dbReference type="InterPro" id="IPR029045">
    <property type="entry name" value="ClpP/crotonase-like_dom_sf"/>
</dbReference>
<dbReference type="InterPro" id="IPR011763">
    <property type="entry name" value="COA_CT_C"/>
</dbReference>
<dbReference type="InterPro" id="IPR011762">
    <property type="entry name" value="COA_CT_N"/>
</dbReference>
<dbReference type="InterPro" id="IPR041010">
    <property type="entry name" value="Znf-ACC"/>
</dbReference>
<dbReference type="NCBIfam" id="TIGR00513">
    <property type="entry name" value="accA"/>
    <property type="match status" value="1"/>
</dbReference>
<dbReference type="NCBIfam" id="NF041504">
    <property type="entry name" value="AccA_sub"/>
    <property type="match status" value="1"/>
</dbReference>
<dbReference type="NCBIfam" id="NF004344">
    <property type="entry name" value="PRK05724.1"/>
    <property type="match status" value="1"/>
</dbReference>
<dbReference type="PANTHER" id="PTHR42853">
    <property type="entry name" value="ACETYL-COENZYME A CARBOXYLASE CARBOXYL TRANSFERASE SUBUNIT ALPHA"/>
    <property type="match status" value="1"/>
</dbReference>
<dbReference type="PANTHER" id="PTHR42853:SF3">
    <property type="entry name" value="ACETYL-COENZYME A CARBOXYLASE CARBOXYL TRANSFERASE SUBUNIT ALPHA, CHLOROPLASTIC"/>
    <property type="match status" value="1"/>
</dbReference>
<dbReference type="Pfam" id="PF03255">
    <property type="entry name" value="ACCA"/>
    <property type="match status" value="1"/>
</dbReference>
<dbReference type="Pfam" id="PF01039">
    <property type="entry name" value="Carboxyl_trans"/>
    <property type="match status" value="1"/>
</dbReference>
<dbReference type="Pfam" id="PF17848">
    <property type="entry name" value="Zn_ribbon_ACC"/>
    <property type="match status" value="1"/>
</dbReference>
<dbReference type="PRINTS" id="PR01069">
    <property type="entry name" value="ACCCTRFRASEA"/>
</dbReference>
<dbReference type="SUPFAM" id="SSF52096">
    <property type="entry name" value="ClpP/crotonase"/>
    <property type="match status" value="2"/>
</dbReference>
<dbReference type="PROSITE" id="PS50989">
    <property type="entry name" value="COA_CT_CTER"/>
    <property type="match status" value="1"/>
</dbReference>
<dbReference type="PROSITE" id="PS50980">
    <property type="entry name" value="COA_CT_NTER"/>
    <property type="match status" value="1"/>
</dbReference>
<sequence length="566" mass="58920">MNPTAPQGGQLWSRCGGCASLLYRKRLRRNLDVCPECGAHSRLDASARLAQLVDPGSFTALPDRAPEVDPIGFVDVLPYPHRLTAARSGTGLVEAVVCGTATVAGHRCAIAVMDFRFLGGSLGCAVGELITRAAERALADRVPLVVVTASGGARMQEGVLSLMQMATVSQAIAALRESGVPSISVLTDPTYGGVAASFATNTDVVLAESGARMGFAGPRVIRQVTGRELPDGFQTAEFLLRHGQVDLVVPRHALRGRLAMLLAAAAGGRPPVGGGSRSEYSPGDRPSAAACRGEGQDAWETVRLARHPGRPTTLDYLETGFDGFVELHGDRLGADCPAVVGGLADLAGRPVMVVGHQKGHTTAELMARNFGMASPAGHRKALRLVRLAARWGLPVVTLVDTPGADPGVDAEEQGQAAAIAENILTLTTLPTPVVAVITGEGGSGGALALAVADRVLMLEHAVYSVISPEGCAAILWPDRSAAPQAARALRLTSADLCRLGVVDAVVPEPAPAAHHDPPAAVQAVREAVLAHLVPLLDVPTATLVRCRRRRFRRFGASRLGVRAGAR</sequence>
<accession>A8M4V8</accession>
<name>ACCDA_SALAI</name>